<protein>
    <recommendedName>
        <fullName>Uncharacterized protein slr0014</fullName>
    </recommendedName>
</protein>
<evidence type="ECO:0000255" key="1"/>
<evidence type="ECO:0000305" key="2"/>
<gene>
    <name type="ordered locus">slr0014</name>
</gene>
<sequence>MEWNESLLRLTVAFVLGSTLGIERQWRQRMAGLRTNTLVAIGAALFVIVSVLTNHDSSPTRIPAQIVSGIGFLAGGVILKEGLTVKGLNTAATLWCSAAVGTLCGQGLFSEAVLGSMMVLVANIALRPLSTFINHQPMHSTELECHYLCHLVCRGDEEANVRRILLDSLAEIKNIKLRSLRSHDLDEFNHFVEVEAAIICTARKDKFLEAVISKLSLNPSVKSVSWQALEQESG</sequence>
<organism>
    <name type="scientific">Synechocystis sp. (strain ATCC 27184 / PCC 6803 / Kazusa)</name>
    <dbReference type="NCBI Taxonomy" id="1111708"/>
    <lineage>
        <taxon>Bacteria</taxon>
        <taxon>Bacillati</taxon>
        <taxon>Cyanobacteriota</taxon>
        <taxon>Cyanophyceae</taxon>
        <taxon>Synechococcales</taxon>
        <taxon>Merismopediaceae</taxon>
        <taxon>Synechocystis</taxon>
    </lineage>
</organism>
<dbReference type="EMBL" id="BA000022">
    <property type="protein sequence ID" value="BAA10194.1"/>
    <property type="molecule type" value="Genomic_DNA"/>
</dbReference>
<dbReference type="EMBL" id="U38802">
    <property type="protein sequence ID" value="AAB72028.1"/>
    <property type="molecule type" value="Genomic_DNA"/>
</dbReference>
<dbReference type="PIR" id="S76342">
    <property type="entry name" value="S76342"/>
</dbReference>
<dbReference type="SMR" id="Q57208"/>
<dbReference type="STRING" id="1148.gene:10499691"/>
<dbReference type="PaxDb" id="1148-1001567"/>
<dbReference type="EnsemblBacteria" id="BAA10194">
    <property type="protein sequence ID" value="BAA10194"/>
    <property type="gene ID" value="BAA10194"/>
</dbReference>
<dbReference type="KEGG" id="syn:slr0014"/>
<dbReference type="eggNOG" id="COG1285">
    <property type="taxonomic scope" value="Bacteria"/>
</dbReference>
<dbReference type="InParanoid" id="Q57208"/>
<dbReference type="PhylomeDB" id="Q57208"/>
<dbReference type="Proteomes" id="UP000001425">
    <property type="component" value="Chromosome"/>
</dbReference>
<dbReference type="GO" id="GO:0005886">
    <property type="term" value="C:plasma membrane"/>
    <property type="evidence" value="ECO:0007669"/>
    <property type="project" value="UniProtKB-SubCell"/>
</dbReference>
<dbReference type="Gene3D" id="3.30.70.260">
    <property type="match status" value="1"/>
</dbReference>
<dbReference type="InterPro" id="IPR048640">
    <property type="entry name" value="MgtC-like_C"/>
</dbReference>
<dbReference type="InterPro" id="IPR003416">
    <property type="entry name" value="MgtC/SapB/SrpB/YhiD_fam"/>
</dbReference>
<dbReference type="InterPro" id="IPR049177">
    <property type="entry name" value="MgtC_SapB_SrpB_YhiD_N"/>
</dbReference>
<dbReference type="PANTHER" id="PTHR33778">
    <property type="entry name" value="PROTEIN MGTC"/>
    <property type="match status" value="1"/>
</dbReference>
<dbReference type="PANTHER" id="PTHR33778:SF3">
    <property type="entry name" value="PROTEIN MGTC"/>
    <property type="match status" value="1"/>
</dbReference>
<dbReference type="Pfam" id="PF02308">
    <property type="entry name" value="MgtC"/>
    <property type="match status" value="1"/>
</dbReference>
<dbReference type="Pfam" id="PF21770">
    <property type="entry name" value="MgtC_SapB_C"/>
    <property type="match status" value="1"/>
</dbReference>
<dbReference type="PRINTS" id="PR01837">
    <property type="entry name" value="MGTCSAPBPROT"/>
</dbReference>
<reference key="1">
    <citation type="journal article" date="1995" name="DNA Res.">
        <title>Sequence analysis of the genome of the unicellular cyanobacterium Synechocystis sp. strain PCC6803. I. Sequence features in the 1 Mb region from map positions 64% to 92% of the genome.</title>
        <authorList>
            <person name="Kaneko T."/>
            <person name="Tanaka A."/>
            <person name="Sato S."/>
            <person name="Kotani H."/>
            <person name="Sazuka T."/>
            <person name="Miyajima N."/>
            <person name="Sugiura M."/>
            <person name="Tabata S."/>
        </authorList>
    </citation>
    <scope>NUCLEOTIDE SEQUENCE [LARGE SCALE GENOMIC DNA]</scope>
    <source>
        <strain>ATCC 27184 / PCC 6803 / N-1</strain>
    </source>
</reference>
<reference key="2">
    <citation type="journal article" date="1996" name="DNA Res.">
        <title>Sequence analysis of the genome of the unicellular cyanobacterium Synechocystis sp. strain PCC6803. II. Sequence determination of the entire genome and assignment of potential protein-coding regions.</title>
        <authorList>
            <person name="Kaneko T."/>
            <person name="Sato S."/>
            <person name="Kotani H."/>
            <person name="Tanaka A."/>
            <person name="Asamizu E."/>
            <person name="Nakamura Y."/>
            <person name="Miyajima N."/>
            <person name="Hirosawa M."/>
            <person name="Sugiura M."/>
            <person name="Sasamoto S."/>
            <person name="Kimura T."/>
            <person name="Hosouchi T."/>
            <person name="Matsuno A."/>
            <person name="Muraki A."/>
            <person name="Nakazaki N."/>
            <person name="Naruo K."/>
            <person name="Okumura S."/>
            <person name="Shimpo S."/>
            <person name="Takeuchi C."/>
            <person name="Wada T."/>
            <person name="Watanabe A."/>
            <person name="Yamada M."/>
            <person name="Yasuda M."/>
            <person name="Tabata S."/>
        </authorList>
    </citation>
    <scope>NUCLEOTIDE SEQUENCE [LARGE SCALE GENOMIC DNA]</scope>
    <source>
        <strain>ATCC 27184 / PCC 6803 / Kazusa</strain>
    </source>
</reference>
<reference key="3">
    <citation type="submission" date="1996-04" db="EMBL/GenBank/DDBJ databases">
        <authorList>
            <person name="Cassier-Chauvat C."/>
            <person name="Poncelet M."/>
            <person name="Villoing S."/>
            <person name="Chauvat F."/>
        </authorList>
    </citation>
    <scope>NUCLEOTIDE SEQUENCE [GENOMIC DNA]</scope>
</reference>
<comment type="subcellular location">
    <subcellularLocation>
        <location evidence="2">Cell membrane</location>
        <topology evidence="2">Multi-pass membrane protein</topology>
    </subcellularLocation>
</comment>
<comment type="similarity">
    <text evidence="2">Belongs to the MgtC/SapB family.</text>
</comment>
<feature type="chain" id="PRO_0000202035" description="Uncharacterized protein slr0014">
    <location>
        <begin position="1"/>
        <end position="234"/>
    </location>
</feature>
<feature type="transmembrane region" description="Helical" evidence="1">
    <location>
        <begin position="32"/>
        <end position="52"/>
    </location>
</feature>
<feature type="transmembrane region" description="Helical" evidence="1">
    <location>
        <begin position="62"/>
        <end position="82"/>
    </location>
</feature>
<feature type="transmembrane region" description="Helical" evidence="1">
    <location>
        <begin position="106"/>
        <end position="126"/>
    </location>
</feature>
<accession>Q57208</accession>
<proteinExistence type="inferred from homology"/>
<name>Y014_SYNY3</name>
<keyword id="KW-1003">Cell membrane</keyword>
<keyword id="KW-0472">Membrane</keyword>
<keyword id="KW-1185">Reference proteome</keyword>
<keyword id="KW-0812">Transmembrane</keyword>
<keyword id="KW-1133">Transmembrane helix</keyword>